<keyword id="KW-0963">Cytoplasm</keyword>
<keyword id="KW-0378">Hydrolase</keyword>
<organism>
    <name type="scientific">Rhodopseudomonas palustris (strain TIE-1)</name>
    <dbReference type="NCBI Taxonomy" id="395960"/>
    <lineage>
        <taxon>Bacteria</taxon>
        <taxon>Pseudomonadati</taxon>
        <taxon>Pseudomonadota</taxon>
        <taxon>Alphaproteobacteria</taxon>
        <taxon>Hyphomicrobiales</taxon>
        <taxon>Nitrobacteraceae</taxon>
        <taxon>Rhodopseudomonas</taxon>
    </lineage>
</organism>
<accession>B3QGK4</accession>
<sequence>MNLSPREKDKLLVSMAAMVARRRLERGVKLNHPEAVALITDFIVEGARDGRSVAELMHAGAQVITRDQCMDGIAEMIHDIQVEATFPDGTKLVTVHQPIR</sequence>
<dbReference type="EC" id="3.5.1.5" evidence="1"/>
<dbReference type="EMBL" id="CP001096">
    <property type="protein sequence ID" value="ACF02681.1"/>
    <property type="molecule type" value="Genomic_DNA"/>
</dbReference>
<dbReference type="RefSeq" id="WP_011159202.1">
    <property type="nucleotide sequence ID" value="NC_011004.1"/>
</dbReference>
<dbReference type="SMR" id="B3QGK4"/>
<dbReference type="KEGG" id="rpt:Rpal_4185"/>
<dbReference type="HOGENOM" id="CLU_145825_1_0_5"/>
<dbReference type="OrthoDB" id="9797217at2"/>
<dbReference type="UniPathway" id="UPA00258">
    <property type="reaction ID" value="UER00370"/>
</dbReference>
<dbReference type="Proteomes" id="UP000001725">
    <property type="component" value="Chromosome"/>
</dbReference>
<dbReference type="GO" id="GO:0005737">
    <property type="term" value="C:cytoplasm"/>
    <property type="evidence" value="ECO:0007669"/>
    <property type="project" value="UniProtKB-SubCell"/>
</dbReference>
<dbReference type="GO" id="GO:0016151">
    <property type="term" value="F:nickel cation binding"/>
    <property type="evidence" value="ECO:0007669"/>
    <property type="project" value="InterPro"/>
</dbReference>
<dbReference type="GO" id="GO:0009039">
    <property type="term" value="F:urease activity"/>
    <property type="evidence" value="ECO:0007669"/>
    <property type="project" value="UniProtKB-UniRule"/>
</dbReference>
<dbReference type="GO" id="GO:0043419">
    <property type="term" value="P:urea catabolic process"/>
    <property type="evidence" value="ECO:0007669"/>
    <property type="project" value="UniProtKB-UniRule"/>
</dbReference>
<dbReference type="CDD" id="cd00390">
    <property type="entry name" value="Urease_gamma"/>
    <property type="match status" value="1"/>
</dbReference>
<dbReference type="Gene3D" id="3.30.280.10">
    <property type="entry name" value="Urease, gamma-like subunit"/>
    <property type="match status" value="1"/>
</dbReference>
<dbReference type="HAMAP" id="MF_00739">
    <property type="entry name" value="Urease_gamma"/>
    <property type="match status" value="1"/>
</dbReference>
<dbReference type="InterPro" id="IPR012010">
    <property type="entry name" value="Urease_gamma"/>
</dbReference>
<dbReference type="InterPro" id="IPR002026">
    <property type="entry name" value="Urease_gamma/gamma-beta_su"/>
</dbReference>
<dbReference type="InterPro" id="IPR036463">
    <property type="entry name" value="Urease_gamma_sf"/>
</dbReference>
<dbReference type="InterPro" id="IPR050069">
    <property type="entry name" value="Urease_subunit"/>
</dbReference>
<dbReference type="NCBIfam" id="NF009712">
    <property type="entry name" value="PRK13241.1"/>
    <property type="match status" value="1"/>
</dbReference>
<dbReference type="NCBIfam" id="TIGR00193">
    <property type="entry name" value="urease_gam"/>
    <property type="match status" value="1"/>
</dbReference>
<dbReference type="PANTHER" id="PTHR33569">
    <property type="entry name" value="UREASE"/>
    <property type="match status" value="1"/>
</dbReference>
<dbReference type="PANTHER" id="PTHR33569:SF1">
    <property type="entry name" value="UREASE"/>
    <property type="match status" value="1"/>
</dbReference>
<dbReference type="Pfam" id="PF00547">
    <property type="entry name" value="Urease_gamma"/>
    <property type="match status" value="1"/>
</dbReference>
<dbReference type="PIRSF" id="PIRSF001223">
    <property type="entry name" value="Urease_gamma"/>
    <property type="match status" value="1"/>
</dbReference>
<dbReference type="SUPFAM" id="SSF54111">
    <property type="entry name" value="Urease, gamma-subunit"/>
    <property type="match status" value="1"/>
</dbReference>
<reference key="1">
    <citation type="submission" date="2008-05" db="EMBL/GenBank/DDBJ databases">
        <title>Complete sequence of Rhodopseudomonas palustris TIE-1.</title>
        <authorList>
            <consortium name="US DOE Joint Genome Institute"/>
            <person name="Lucas S."/>
            <person name="Copeland A."/>
            <person name="Lapidus A."/>
            <person name="Glavina del Rio T."/>
            <person name="Dalin E."/>
            <person name="Tice H."/>
            <person name="Pitluck S."/>
            <person name="Chain P."/>
            <person name="Malfatti S."/>
            <person name="Shin M."/>
            <person name="Vergez L."/>
            <person name="Lang D."/>
            <person name="Schmutz J."/>
            <person name="Larimer F."/>
            <person name="Land M."/>
            <person name="Hauser L."/>
            <person name="Kyrpides N."/>
            <person name="Mikhailova N."/>
            <person name="Emerson D."/>
            <person name="Newman D.K."/>
            <person name="Roden E."/>
            <person name="Richardson P."/>
        </authorList>
    </citation>
    <scope>NUCLEOTIDE SEQUENCE [LARGE SCALE GENOMIC DNA]</scope>
    <source>
        <strain>TIE-1</strain>
    </source>
</reference>
<proteinExistence type="inferred from homology"/>
<evidence type="ECO:0000255" key="1">
    <source>
        <dbReference type="HAMAP-Rule" id="MF_00739"/>
    </source>
</evidence>
<feature type="chain" id="PRO_1000199883" description="Urease subunit gamma">
    <location>
        <begin position="1"/>
        <end position="100"/>
    </location>
</feature>
<name>URE3_RHOPT</name>
<comment type="catalytic activity">
    <reaction evidence="1">
        <text>urea + 2 H2O + H(+) = hydrogencarbonate + 2 NH4(+)</text>
        <dbReference type="Rhea" id="RHEA:20557"/>
        <dbReference type="ChEBI" id="CHEBI:15377"/>
        <dbReference type="ChEBI" id="CHEBI:15378"/>
        <dbReference type="ChEBI" id="CHEBI:16199"/>
        <dbReference type="ChEBI" id="CHEBI:17544"/>
        <dbReference type="ChEBI" id="CHEBI:28938"/>
        <dbReference type="EC" id="3.5.1.5"/>
    </reaction>
</comment>
<comment type="pathway">
    <text evidence="1">Nitrogen metabolism; urea degradation; CO(2) and NH(3) from urea (urease route): step 1/1.</text>
</comment>
<comment type="subunit">
    <text evidence="1">Heterotrimer of UreA (gamma), UreB (beta) and UreC (alpha) subunits. Three heterotrimers associate to form the active enzyme.</text>
</comment>
<comment type="subcellular location">
    <subcellularLocation>
        <location evidence="1">Cytoplasm</location>
    </subcellularLocation>
</comment>
<comment type="similarity">
    <text evidence="1">Belongs to the urease gamma subunit family.</text>
</comment>
<gene>
    <name evidence="1" type="primary">ureA</name>
    <name type="ordered locus">Rpal_4185</name>
</gene>
<protein>
    <recommendedName>
        <fullName evidence="1">Urease subunit gamma</fullName>
        <ecNumber evidence="1">3.5.1.5</ecNumber>
    </recommendedName>
    <alternativeName>
        <fullName evidence="1">Urea amidohydrolase subunit gamma</fullName>
    </alternativeName>
</protein>